<evidence type="ECO:0000250" key="1"/>
<evidence type="ECO:0000250" key="2">
    <source>
        <dbReference type="UniProtKB" id="Q6Z955"/>
    </source>
</evidence>
<evidence type="ECO:0000250" key="3">
    <source>
        <dbReference type="UniProtKB" id="Q8LNV6"/>
    </source>
</evidence>
<evidence type="ECO:0000250" key="4">
    <source>
        <dbReference type="UniProtKB" id="Q9FUJ1"/>
    </source>
</evidence>
<evidence type="ECO:0000250" key="5">
    <source>
        <dbReference type="UniProtKB" id="Q9T0N8"/>
    </source>
</evidence>
<evidence type="ECO:0000255" key="6"/>
<evidence type="ECO:0000255" key="7">
    <source>
        <dbReference type="PROSITE-ProRule" id="PRU00718"/>
    </source>
</evidence>
<evidence type="ECO:0000305" key="8"/>
<accession>A3AVP1</accession>
<accession>A0A0P0WCU6</accession>
<accession>Q7XKG1</accession>
<reference key="1">
    <citation type="journal article" date="2002" name="Nature">
        <title>Sequence and analysis of rice chromosome 4.</title>
        <authorList>
            <person name="Feng Q."/>
            <person name="Zhang Y."/>
            <person name="Hao P."/>
            <person name="Wang S."/>
            <person name="Fu G."/>
            <person name="Huang Y."/>
            <person name="Li Y."/>
            <person name="Zhu J."/>
            <person name="Liu Y."/>
            <person name="Hu X."/>
            <person name="Jia P."/>
            <person name="Zhang Y."/>
            <person name="Zhao Q."/>
            <person name="Ying K."/>
            <person name="Yu S."/>
            <person name="Tang Y."/>
            <person name="Weng Q."/>
            <person name="Zhang L."/>
            <person name="Lu Y."/>
            <person name="Mu J."/>
            <person name="Lu Y."/>
            <person name="Zhang L.S."/>
            <person name="Yu Z."/>
            <person name="Fan D."/>
            <person name="Liu X."/>
            <person name="Lu T."/>
            <person name="Li C."/>
            <person name="Wu Y."/>
            <person name="Sun T."/>
            <person name="Lei H."/>
            <person name="Li T."/>
            <person name="Hu H."/>
            <person name="Guan J."/>
            <person name="Wu M."/>
            <person name="Zhang R."/>
            <person name="Zhou B."/>
            <person name="Chen Z."/>
            <person name="Chen L."/>
            <person name="Jin Z."/>
            <person name="Wang R."/>
            <person name="Yin H."/>
            <person name="Cai Z."/>
            <person name="Ren S."/>
            <person name="Lv G."/>
            <person name="Gu W."/>
            <person name="Zhu G."/>
            <person name="Tu Y."/>
            <person name="Jia J."/>
            <person name="Zhang Y."/>
            <person name="Chen J."/>
            <person name="Kang H."/>
            <person name="Chen X."/>
            <person name="Shao C."/>
            <person name="Sun Y."/>
            <person name="Hu Q."/>
            <person name="Zhang X."/>
            <person name="Zhang W."/>
            <person name="Wang L."/>
            <person name="Ding C."/>
            <person name="Sheng H."/>
            <person name="Gu J."/>
            <person name="Chen S."/>
            <person name="Ni L."/>
            <person name="Zhu F."/>
            <person name="Chen W."/>
            <person name="Lan L."/>
            <person name="Lai Y."/>
            <person name="Cheng Z."/>
            <person name="Gu M."/>
            <person name="Jiang J."/>
            <person name="Li J."/>
            <person name="Hong G."/>
            <person name="Xue Y."/>
            <person name="Han B."/>
        </authorList>
    </citation>
    <scope>NUCLEOTIDE SEQUENCE [LARGE SCALE GENOMIC DNA]</scope>
    <source>
        <strain>cv. Nipponbare</strain>
    </source>
</reference>
<reference key="2">
    <citation type="journal article" date="2005" name="Nature">
        <title>The map-based sequence of the rice genome.</title>
        <authorList>
            <consortium name="International rice genome sequencing project (IRGSP)"/>
        </authorList>
    </citation>
    <scope>NUCLEOTIDE SEQUENCE [LARGE SCALE GENOMIC DNA]</scope>
    <source>
        <strain>cv. Nipponbare</strain>
    </source>
</reference>
<reference key="3">
    <citation type="journal article" date="2013" name="Rice">
        <title>Improvement of the Oryza sativa Nipponbare reference genome using next generation sequence and optical map data.</title>
        <authorList>
            <person name="Kawahara Y."/>
            <person name="de la Bastide M."/>
            <person name="Hamilton J.P."/>
            <person name="Kanamori H."/>
            <person name="McCombie W.R."/>
            <person name="Ouyang S."/>
            <person name="Schwartz D.C."/>
            <person name="Tanaka T."/>
            <person name="Wu J."/>
            <person name="Zhou S."/>
            <person name="Childs K.L."/>
            <person name="Davidson R.M."/>
            <person name="Lin H."/>
            <person name="Quesada-Ocampo L."/>
            <person name="Vaillancourt B."/>
            <person name="Sakai H."/>
            <person name="Lee S.S."/>
            <person name="Kim J."/>
            <person name="Numa H."/>
            <person name="Itoh T."/>
            <person name="Buell C.R."/>
            <person name="Matsumoto T."/>
        </authorList>
    </citation>
    <scope>GENOME REANNOTATION</scope>
    <source>
        <strain>cv. Nipponbare</strain>
    </source>
</reference>
<reference key="4">
    <citation type="journal article" date="2005" name="PLoS Biol.">
        <title>The genomes of Oryza sativa: a history of duplications.</title>
        <authorList>
            <person name="Yu J."/>
            <person name="Wang J."/>
            <person name="Lin W."/>
            <person name="Li S."/>
            <person name="Li H."/>
            <person name="Zhou J."/>
            <person name="Ni P."/>
            <person name="Dong W."/>
            <person name="Hu S."/>
            <person name="Zeng C."/>
            <person name="Zhang J."/>
            <person name="Zhang Y."/>
            <person name="Li R."/>
            <person name="Xu Z."/>
            <person name="Li S."/>
            <person name="Li X."/>
            <person name="Zheng H."/>
            <person name="Cong L."/>
            <person name="Lin L."/>
            <person name="Yin J."/>
            <person name="Geng J."/>
            <person name="Li G."/>
            <person name="Shi J."/>
            <person name="Liu J."/>
            <person name="Lv H."/>
            <person name="Li J."/>
            <person name="Wang J."/>
            <person name="Deng Y."/>
            <person name="Ran L."/>
            <person name="Shi X."/>
            <person name="Wang X."/>
            <person name="Wu Q."/>
            <person name="Li C."/>
            <person name="Ren X."/>
            <person name="Wang J."/>
            <person name="Wang X."/>
            <person name="Li D."/>
            <person name="Liu D."/>
            <person name="Zhang X."/>
            <person name="Ji Z."/>
            <person name="Zhao W."/>
            <person name="Sun Y."/>
            <person name="Zhang Z."/>
            <person name="Bao J."/>
            <person name="Han Y."/>
            <person name="Dong L."/>
            <person name="Ji J."/>
            <person name="Chen P."/>
            <person name="Wu S."/>
            <person name="Liu J."/>
            <person name="Xiao Y."/>
            <person name="Bu D."/>
            <person name="Tan J."/>
            <person name="Yang L."/>
            <person name="Ye C."/>
            <person name="Zhang J."/>
            <person name="Xu J."/>
            <person name="Zhou Y."/>
            <person name="Yu Y."/>
            <person name="Zhang B."/>
            <person name="Zhuang S."/>
            <person name="Wei H."/>
            <person name="Liu B."/>
            <person name="Lei M."/>
            <person name="Yu H."/>
            <person name="Li Y."/>
            <person name="Xu H."/>
            <person name="Wei S."/>
            <person name="He X."/>
            <person name="Fang L."/>
            <person name="Zhang Z."/>
            <person name="Zhang Y."/>
            <person name="Huang X."/>
            <person name="Su Z."/>
            <person name="Tong W."/>
            <person name="Li J."/>
            <person name="Tong Z."/>
            <person name="Li S."/>
            <person name="Ye J."/>
            <person name="Wang L."/>
            <person name="Fang L."/>
            <person name="Lei T."/>
            <person name="Chen C.-S."/>
            <person name="Chen H.-C."/>
            <person name="Xu Z."/>
            <person name="Li H."/>
            <person name="Huang H."/>
            <person name="Zhang F."/>
            <person name="Xu H."/>
            <person name="Li N."/>
            <person name="Zhao C."/>
            <person name="Li S."/>
            <person name="Dong L."/>
            <person name="Huang Y."/>
            <person name="Li L."/>
            <person name="Xi Y."/>
            <person name="Qi Q."/>
            <person name="Li W."/>
            <person name="Zhang B."/>
            <person name="Hu W."/>
            <person name="Zhang Y."/>
            <person name="Tian X."/>
            <person name="Jiao Y."/>
            <person name="Liang X."/>
            <person name="Jin J."/>
            <person name="Gao L."/>
            <person name="Zheng W."/>
            <person name="Hao B."/>
            <person name="Liu S.-M."/>
            <person name="Wang W."/>
            <person name="Yuan L."/>
            <person name="Cao M."/>
            <person name="McDermott J."/>
            <person name="Samudrala R."/>
            <person name="Wang J."/>
            <person name="Wong G.K.-S."/>
            <person name="Yang H."/>
        </authorList>
    </citation>
    <scope>NUCLEOTIDE SEQUENCE [LARGE SCALE GENOMIC DNA]</scope>
    <source>
        <strain>cv. Nipponbare</strain>
    </source>
</reference>
<reference key="5">
    <citation type="journal article" date="2005" name="Science">
        <title>Cytokinin oxidase regulates rice grain production.</title>
        <authorList>
            <person name="Ashikari M."/>
            <person name="Sakakibara H."/>
            <person name="Lin S."/>
            <person name="Yamamoto T."/>
            <person name="Takashi T."/>
            <person name="Nishimura A."/>
            <person name="Angeles E.R."/>
            <person name="Qian Q."/>
            <person name="Kitano H."/>
            <person name="Matsuoka M."/>
        </authorList>
    </citation>
    <scope>GENE FAMILY</scope>
    <scope>NOMENCLATURE</scope>
    <source>
        <strain>cv. Koshihikari</strain>
    </source>
</reference>
<feature type="signal peptide" evidence="6">
    <location>
        <begin position="1"/>
        <end position="26"/>
    </location>
</feature>
<feature type="chain" id="PRO_0000394211" description="Cytokinin dehydrogenase 8">
    <location>
        <begin position="27"/>
        <end position="532"/>
    </location>
</feature>
<feature type="domain" description="FAD-binding PCMH-type" evidence="7">
    <location>
        <begin position="51"/>
        <end position="238"/>
    </location>
</feature>
<feature type="binding site" evidence="4">
    <location>
        <position position="87"/>
    </location>
    <ligand>
        <name>FAD</name>
        <dbReference type="ChEBI" id="CHEBI:57692"/>
    </ligand>
</feature>
<feature type="binding site" evidence="5">
    <location>
        <position position="89"/>
    </location>
    <ligand>
        <name>FAD</name>
        <dbReference type="ChEBI" id="CHEBI:57692"/>
    </ligand>
</feature>
<feature type="binding site" evidence="5">
    <location>
        <position position="91"/>
    </location>
    <ligand>
        <name>FAD</name>
        <dbReference type="ChEBI" id="CHEBI:57692"/>
    </ligand>
</feature>
<feature type="binding site" evidence="5">
    <location>
        <position position="93"/>
    </location>
    <ligand>
        <name>FAD</name>
        <dbReference type="ChEBI" id="CHEBI:57692"/>
    </ligand>
</feature>
<feature type="binding site" evidence="5">
    <location>
        <position position="97"/>
    </location>
    <ligand>
        <name>FAD</name>
        <dbReference type="ChEBI" id="CHEBI:57692"/>
    </ligand>
</feature>
<feature type="binding site" evidence="5">
    <location>
        <position position="162"/>
    </location>
    <ligand>
        <name>FAD</name>
        <dbReference type="ChEBI" id="CHEBI:57692"/>
    </ligand>
</feature>
<feature type="binding site" evidence="5">
    <location>
        <position position="167"/>
    </location>
    <ligand>
        <name>FAD</name>
        <dbReference type="ChEBI" id="CHEBI:57692"/>
    </ligand>
</feature>
<feature type="binding site" evidence="5">
    <location>
        <position position="173"/>
    </location>
    <ligand>
        <name>FAD</name>
        <dbReference type="ChEBI" id="CHEBI:57692"/>
    </ligand>
</feature>
<feature type="binding site" evidence="5">
    <location>
        <position position="177"/>
    </location>
    <ligand>
        <name>FAD</name>
        <dbReference type="ChEBI" id="CHEBI:57692"/>
    </ligand>
</feature>
<feature type="binding site" evidence="5">
    <location>
        <position position="228"/>
    </location>
    <ligand>
        <name>FAD</name>
        <dbReference type="ChEBI" id="CHEBI:57692"/>
    </ligand>
</feature>
<feature type="binding site" evidence="5">
    <location>
        <position position="482"/>
    </location>
    <ligand>
        <name>FAD</name>
        <dbReference type="ChEBI" id="CHEBI:57692"/>
    </ligand>
</feature>
<feature type="binding site" evidence="5">
    <location>
        <position position="520"/>
    </location>
    <ligand>
        <name>FAD</name>
        <dbReference type="ChEBI" id="CHEBI:57692"/>
    </ligand>
</feature>
<feature type="modified residue" description="Pros-8alpha-FAD histidine" evidence="5">
    <location>
        <position position="92"/>
    </location>
</feature>
<feature type="glycosylation site" description="N-linked (GlcNAc...) asparagine" evidence="6">
    <location>
        <position position="420"/>
    </location>
</feature>
<gene>
    <name type="primary">CKX8</name>
    <name type="ordered locus">Os04g0523500</name>
    <name type="ordered locus">LOC_Os04g44230</name>
    <name type="ORF">OsJ_15507</name>
    <name type="ORF">OSJNBb0065J09.8</name>
</gene>
<organism>
    <name type="scientific">Oryza sativa subsp. japonica</name>
    <name type="common">Rice</name>
    <dbReference type="NCBI Taxonomy" id="39947"/>
    <lineage>
        <taxon>Eukaryota</taxon>
        <taxon>Viridiplantae</taxon>
        <taxon>Streptophyta</taxon>
        <taxon>Embryophyta</taxon>
        <taxon>Tracheophyta</taxon>
        <taxon>Spermatophyta</taxon>
        <taxon>Magnoliopsida</taxon>
        <taxon>Liliopsida</taxon>
        <taxon>Poales</taxon>
        <taxon>Poaceae</taxon>
        <taxon>BOP clade</taxon>
        <taxon>Oryzoideae</taxon>
        <taxon>Oryzeae</taxon>
        <taxon>Oryzinae</taxon>
        <taxon>Oryza</taxon>
        <taxon>Oryza sativa</taxon>
    </lineage>
</organism>
<protein>
    <recommendedName>
        <fullName>Cytokinin dehydrogenase 8</fullName>
        <ecNumber evidence="3">1.5.99.12</ecNumber>
    </recommendedName>
    <alternativeName>
        <fullName>Cytokinin oxidase 8</fullName>
        <shortName>OsCKX8</shortName>
    </alternativeName>
</protein>
<comment type="function">
    <text evidence="2">Catalyzes the oxidation of cytokinins, a family of N(6)-substituted adenine derivatives that are plant hormones, where the substituent is an isopentenyl group.</text>
</comment>
<comment type="catalytic activity">
    <reaction evidence="3">
        <text>N(6)-dimethylallyladenine + A + H2O = 3-methyl-2-butenal + adenine + AH2</text>
        <dbReference type="Rhea" id="RHEA:13625"/>
        <dbReference type="ChEBI" id="CHEBI:13193"/>
        <dbReference type="ChEBI" id="CHEBI:15377"/>
        <dbReference type="ChEBI" id="CHEBI:15825"/>
        <dbReference type="ChEBI" id="CHEBI:16708"/>
        <dbReference type="ChEBI" id="CHEBI:17499"/>
        <dbReference type="ChEBI" id="CHEBI:17660"/>
        <dbReference type="EC" id="1.5.99.12"/>
    </reaction>
</comment>
<comment type="cofactor">
    <cofactor evidence="3">
        <name>FAD</name>
        <dbReference type="ChEBI" id="CHEBI:57692"/>
    </cofactor>
</comment>
<comment type="subunit">
    <text evidence="1">Monomer.</text>
</comment>
<comment type="subcellular location">
    <subcellularLocation>
        <location evidence="1">Secreted</location>
        <location evidence="1">Extracellular space</location>
    </subcellularLocation>
</comment>
<comment type="similarity">
    <text evidence="8">Belongs to the oxygen-dependent FAD-linked oxidoreductase family.</text>
</comment>
<sequence>MELKAMYLYAAVLAVLLCSSVNFIQSPTDVLGPVALLEPTPSSARDFGAVVSDAPFAVMRPESPDDIALLLGALSSTAPSPRATVAAVGAGHSLHGQAQARDGIVVETRALPRDVHVVSARAHGGDDDATVRAYADVGAGALWVEVLEECLKLGLAPPSWTDYLYLTVGGTLSNGGISGQTFKHGPQISNVLQLEVVTGKGEVVTCSPTEIPELFFAVLGGLGQFGIITRARIPLQLAPPKVRWVRAFYDSFETFTGDQELLVSMPEQVDYVEGFMVLNEQSLHSSSVAFPAQLNFSPDFGSKGRKKVYYCIEFAVHDFQQDSSRADHVVKLVSAKLSYLRPHVYSVEVSYFDFLNRVRMEEESLRSRGLWDVPHPWLNVFVPKHGITQFKGLLMDTVSADDFEGPILVYPLLTDKWDGNTSAVVPAAPDGVMYIFGVLRSTDPARCGRACVDSIMARHRRVADEACRDGGGGGRGIGAKQYLARQPSPARWRDHFGAGWGRFAARKARFDPLHVLGPGQGIFPRTDSAGSM</sequence>
<proteinExistence type="inferred from homology"/>
<keyword id="KW-0274">FAD</keyword>
<keyword id="KW-0285">Flavoprotein</keyword>
<keyword id="KW-0325">Glycoprotein</keyword>
<keyword id="KW-0560">Oxidoreductase</keyword>
<keyword id="KW-1185">Reference proteome</keyword>
<keyword id="KW-0964">Secreted</keyword>
<keyword id="KW-0732">Signal</keyword>
<dbReference type="EC" id="1.5.99.12" evidence="3"/>
<dbReference type="EMBL" id="AL663010">
    <property type="protein sequence ID" value="CAE05712.2"/>
    <property type="molecule type" value="Genomic_DNA"/>
</dbReference>
<dbReference type="EMBL" id="AP014960">
    <property type="protein sequence ID" value="BAS90142.1"/>
    <property type="molecule type" value="Genomic_DNA"/>
</dbReference>
<dbReference type="EMBL" id="CM000141">
    <property type="protein sequence ID" value="EAZ31380.1"/>
    <property type="molecule type" value="Genomic_DNA"/>
</dbReference>
<dbReference type="SMR" id="A3AVP1"/>
<dbReference type="FunCoup" id="A3AVP1">
    <property type="interactions" value="23"/>
</dbReference>
<dbReference type="STRING" id="39947.A3AVP1"/>
<dbReference type="GlyCosmos" id="A3AVP1">
    <property type="glycosylation" value="1 site, No reported glycans"/>
</dbReference>
<dbReference type="PaxDb" id="39947-A3AVP1"/>
<dbReference type="EnsemblPlants" id="Os04t0523500-00">
    <property type="protein sequence ID" value="Os04t0523500-00"/>
    <property type="gene ID" value="Os04g0523500"/>
</dbReference>
<dbReference type="GeneID" id="107275925"/>
<dbReference type="Gramene" id="Os04t0523500-00">
    <property type="protein sequence ID" value="Os04t0523500-00"/>
    <property type="gene ID" value="Os04g0523500"/>
</dbReference>
<dbReference type="KEGG" id="osa:107275925"/>
<dbReference type="eggNOG" id="KOG1231">
    <property type="taxonomic scope" value="Eukaryota"/>
</dbReference>
<dbReference type="HOGENOM" id="CLU_024955_1_0_1"/>
<dbReference type="InParanoid" id="A3AVP1"/>
<dbReference type="OMA" id="DGSRADH"/>
<dbReference type="OrthoDB" id="415825at2759"/>
<dbReference type="Proteomes" id="UP000000763">
    <property type="component" value="Chromosome 4"/>
</dbReference>
<dbReference type="Proteomes" id="UP000007752">
    <property type="component" value="Chromosome 4"/>
</dbReference>
<dbReference type="Proteomes" id="UP000059680">
    <property type="component" value="Chromosome 4"/>
</dbReference>
<dbReference type="GO" id="GO:0005576">
    <property type="term" value="C:extracellular region"/>
    <property type="evidence" value="ECO:0007669"/>
    <property type="project" value="UniProtKB-SubCell"/>
</dbReference>
<dbReference type="GO" id="GO:0019139">
    <property type="term" value="F:cytokinin dehydrogenase activity"/>
    <property type="evidence" value="ECO:0007669"/>
    <property type="project" value="UniProtKB-EC"/>
</dbReference>
<dbReference type="GO" id="GO:0071949">
    <property type="term" value="F:FAD binding"/>
    <property type="evidence" value="ECO:0007669"/>
    <property type="project" value="InterPro"/>
</dbReference>
<dbReference type="GO" id="GO:0016491">
    <property type="term" value="F:oxidoreductase activity"/>
    <property type="evidence" value="ECO:0000318"/>
    <property type="project" value="GO_Central"/>
</dbReference>
<dbReference type="GO" id="GO:0009690">
    <property type="term" value="P:cytokinin metabolic process"/>
    <property type="evidence" value="ECO:0007669"/>
    <property type="project" value="InterPro"/>
</dbReference>
<dbReference type="Gene3D" id="3.30.465.10">
    <property type="match status" value="1"/>
</dbReference>
<dbReference type="Gene3D" id="3.40.462.10">
    <property type="entry name" value="FAD-linked oxidases, C-terminal domain"/>
    <property type="match status" value="1"/>
</dbReference>
<dbReference type="Gene3D" id="3.30.43.10">
    <property type="entry name" value="Uridine Diphospho-n-acetylenolpyruvylglucosamine Reductase, domain 2"/>
    <property type="match status" value="1"/>
</dbReference>
<dbReference type="InterPro" id="IPR016170">
    <property type="entry name" value="Cytok_DH_C_sf"/>
</dbReference>
<dbReference type="InterPro" id="IPR015345">
    <property type="entry name" value="Cytokinin_DH_FAD/cytokin-bd"/>
</dbReference>
<dbReference type="InterPro" id="IPR016166">
    <property type="entry name" value="FAD-bd_PCMH"/>
</dbReference>
<dbReference type="InterPro" id="IPR036318">
    <property type="entry name" value="FAD-bd_PCMH-like_sf"/>
</dbReference>
<dbReference type="InterPro" id="IPR016167">
    <property type="entry name" value="FAD-bd_PCMH_sub1"/>
</dbReference>
<dbReference type="InterPro" id="IPR016169">
    <property type="entry name" value="FAD-bd_PCMH_sub2"/>
</dbReference>
<dbReference type="InterPro" id="IPR016164">
    <property type="entry name" value="FAD-linked_Oxase-like_C"/>
</dbReference>
<dbReference type="InterPro" id="IPR050432">
    <property type="entry name" value="FAD-linked_Oxidoreductases_BP"/>
</dbReference>
<dbReference type="InterPro" id="IPR006094">
    <property type="entry name" value="Oxid_FAD_bind_N"/>
</dbReference>
<dbReference type="PANTHER" id="PTHR13878:SF59">
    <property type="entry name" value="CYTOKININ DEHYDROGENASE 8"/>
    <property type="match status" value="1"/>
</dbReference>
<dbReference type="PANTHER" id="PTHR13878">
    <property type="entry name" value="GULONOLACTONE OXIDASE"/>
    <property type="match status" value="1"/>
</dbReference>
<dbReference type="Pfam" id="PF09265">
    <property type="entry name" value="Cytokin-bind"/>
    <property type="match status" value="1"/>
</dbReference>
<dbReference type="Pfam" id="PF01565">
    <property type="entry name" value="FAD_binding_4"/>
    <property type="match status" value="1"/>
</dbReference>
<dbReference type="SUPFAM" id="SSF56176">
    <property type="entry name" value="FAD-binding/transporter-associated domain-like"/>
    <property type="match status" value="1"/>
</dbReference>
<dbReference type="SUPFAM" id="SSF55103">
    <property type="entry name" value="FAD-linked oxidases, C-terminal domain"/>
    <property type="match status" value="1"/>
</dbReference>
<dbReference type="PROSITE" id="PS51387">
    <property type="entry name" value="FAD_PCMH"/>
    <property type="match status" value="1"/>
</dbReference>
<name>CKX8_ORYSJ</name>